<comment type="function">
    <text evidence="1">Protein S19 forms a complex with S13 that binds strongly to the 16S ribosomal RNA.</text>
</comment>
<comment type="similarity">
    <text evidence="1">Belongs to the universal ribosomal protein uS19 family.</text>
</comment>
<sequence length="93" mass="10750">MGRSLKKGPFVDEHLMKKVEAQANDEKKKVIKTWSRRSTIFPSFIGYTIAVYDGRKHVPVYIQEDMVGHKLGEFAPTRTYKGHAADDKKTRRK</sequence>
<dbReference type="EMBL" id="FM211187">
    <property type="protein sequence ID" value="CAR68063.1"/>
    <property type="molecule type" value="Genomic_DNA"/>
</dbReference>
<dbReference type="RefSeq" id="WP_000533766.1">
    <property type="nucleotide sequence ID" value="NC_011900.1"/>
</dbReference>
<dbReference type="SMR" id="B8ZKG1"/>
<dbReference type="GeneID" id="93920908"/>
<dbReference type="KEGG" id="sne:SPN23F02030"/>
<dbReference type="HOGENOM" id="CLU_144911_0_1_9"/>
<dbReference type="GO" id="GO:0005737">
    <property type="term" value="C:cytoplasm"/>
    <property type="evidence" value="ECO:0007669"/>
    <property type="project" value="UniProtKB-ARBA"/>
</dbReference>
<dbReference type="GO" id="GO:0015935">
    <property type="term" value="C:small ribosomal subunit"/>
    <property type="evidence" value="ECO:0007669"/>
    <property type="project" value="InterPro"/>
</dbReference>
<dbReference type="GO" id="GO:0019843">
    <property type="term" value="F:rRNA binding"/>
    <property type="evidence" value="ECO:0007669"/>
    <property type="project" value="UniProtKB-UniRule"/>
</dbReference>
<dbReference type="GO" id="GO:0003735">
    <property type="term" value="F:structural constituent of ribosome"/>
    <property type="evidence" value="ECO:0007669"/>
    <property type="project" value="InterPro"/>
</dbReference>
<dbReference type="GO" id="GO:0000028">
    <property type="term" value="P:ribosomal small subunit assembly"/>
    <property type="evidence" value="ECO:0007669"/>
    <property type="project" value="TreeGrafter"/>
</dbReference>
<dbReference type="GO" id="GO:0006412">
    <property type="term" value="P:translation"/>
    <property type="evidence" value="ECO:0007669"/>
    <property type="project" value="UniProtKB-UniRule"/>
</dbReference>
<dbReference type="FunFam" id="3.30.860.10:FF:000001">
    <property type="entry name" value="30S ribosomal protein S19"/>
    <property type="match status" value="1"/>
</dbReference>
<dbReference type="Gene3D" id="3.30.860.10">
    <property type="entry name" value="30s Ribosomal Protein S19, Chain A"/>
    <property type="match status" value="1"/>
</dbReference>
<dbReference type="HAMAP" id="MF_00531">
    <property type="entry name" value="Ribosomal_uS19"/>
    <property type="match status" value="1"/>
</dbReference>
<dbReference type="InterPro" id="IPR002222">
    <property type="entry name" value="Ribosomal_uS19"/>
</dbReference>
<dbReference type="InterPro" id="IPR005732">
    <property type="entry name" value="Ribosomal_uS19_bac-type"/>
</dbReference>
<dbReference type="InterPro" id="IPR020934">
    <property type="entry name" value="Ribosomal_uS19_CS"/>
</dbReference>
<dbReference type="InterPro" id="IPR023575">
    <property type="entry name" value="Ribosomal_uS19_SF"/>
</dbReference>
<dbReference type="NCBIfam" id="TIGR01050">
    <property type="entry name" value="rpsS_bact"/>
    <property type="match status" value="1"/>
</dbReference>
<dbReference type="PANTHER" id="PTHR11880">
    <property type="entry name" value="RIBOSOMAL PROTEIN S19P FAMILY MEMBER"/>
    <property type="match status" value="1"/>
</dbReference>
<dbReference type="PANTHER" id="PTHR11880:SF8">
    <property type="entry name" value="SMALL RIBOSOMAL SUBUNIT PROTEIN US19M"/>
    <property type="match status" value="1"/>
</dbReference>
<dbReference type="Pfam" id="PF00203">
    <property type="entry name" value="Ribosomal_S19"/>
    <property type="match status" value="1"/>
</dbReference>
<dbReference type="PIRSF" id="PIRSF002144">
    <property type="entry name" value="Ribosomal_S19"/>
    <property type="match status" value="1"/>
</dbReference>
<dbReference type="PRINTS" id="PR00975">
    <property type="entry name" value="RIBOSOMALS19"/>
</dbReference>
<dbReference type="SUPFAM" id="SSF54570">
    <property type="entry name" value="Ribosomal protein S19"/>
    <property type="match status" value="1"/>
</dbReference>
<dbReference type="PROSITE" id="PS00323">
    <property type="entry name" value="RIBOSOMAL_S19"/>
    <property type="match status" value="1"/>
</dbReference>
<name>RS19_STRPJ</name>
<protein>
    <recommendedName>
        <fullName evidence="1">Small ribosomal subunit protein uS19</fullName>
    </recommendedName>
    <alternativeName>
        <fullName evidence="2">30S ribosomal protein S19</fullName>
    </alternativeName>
</protein>
<proteinExistence type="inferred from homology"/>
<organism>
    <name type="scientific">Streptococcus pneumoniae (strain ATCC 700669 / Spain 23F-1)</name>
    <dbReference type="NCBI Taxonomy" id="561276"/>
    <lineage>
        <taxon>Bacteria</taxon>
        <taxon>Bacillati</taxon>
        <taxon>Bacillota</taxon>
        <taxon>Bacilli</taxon>
        <taxon>Lactobacillales</taxon>
        <taxon>Streptococcaceae</taxon>
        <taxon>Streptococcus</taxon>
    </lineage>
</organism>
<reference key="1">
    <citation type="journal article" date="2009" name="J. Bacteriol.">
        <title>Role of conjugative elements in the evolution of the multidrug-resistant pandemic clone Streptococcus pneumoniae Spain23F ST81.</title>
        <authorList>
            <person name="Croucher N.J."/>
            <person name="Walker D."/>
            <person name="Romero P."/>
            <person name="Lennard N."/>
            <person name="Paterson G.K."/>
            <person name="Bason N.C."/>
            <person name="Mitchell A.M."/>
            <person name="Quail M.A."/>
            <person name="Andrew P.W."/>
            <person name="Parkhill J."/>
            <person name="Bentley S.D."/>
            <person name="Mitchell T.J."/>
        </authorList>
    </citation>
    <scope>NUCLEOTIDE SEQUENCE [LARGE SCALE GENOMIC DNA]</scope>
    <source>
        <strain>ATCC 700669 / Spain 23F-1</strain>
    </source>
</reference>
<evidence type="ECO:0000255" key="1">
    <source>
        <dbReference type="HAMAP-Rule" id="MF_00531"/>
    </source>
</evidence>
<evidence type="ECO:0000305" key="2"/>
<keyword id="KW-0687">Ribonucleoprotein</keyword>
<keyword id="KW-0689">Ribosomal protein</keyword>
<keyword id="KW-0694">RNA-binding</keyword>
<keyword id="KW-0699">rRNA-binding</keyword>
<gene>
    <name evidence="1" type="primary">rpsS</name>
    <name type="ordered locus">SPN23F02030</name>
</gene>
<feature type="chain" id="PRO_1000146415" description="Small ribosomal subunit protein uS19">
    <location>
        <begin position="1"/>
        <end position="93"/>
    </location>
</feature>
<accession>B8ZKG1</accession>